<organism>
    <name type="scientific">Arabidopsis thaliana</name>
    <name type="common">Mouse-ear cress</name>
    <dbReference type="NCBI Taxonomy" id="3702"/>
    <lineage>
        <taxon>Eukaryota</taxon>
        <taxon>Viridiplantae</taxon>
        <taxon>Streptophyta</taxon>
        <taxon>Embryophyta</taxon>
        <taxon>Tracheophyta</taxon>
        <taxon>Spermatophyta</taxon>
        <taxon>Magnoliopsida</taxon>
        <taxon>eudicotyledons</taxon>
        <taxon>Gunneridae</taxon>
        <taxon>Pentapetalae</taxon>
        <taxon>rosids</taxon>
        <taxon>malvids</taxon>
        <taxon>Brassicales</taxon>
        <taxon>Brassicaceae</taxon>
        <taxon>Camelineae</taxon>
        <taxon>Arabidopsis</taxon>
    </lineage>
</organism>
<name>DHLEA_ARATH</name>
<evidence type="ECO:0000256" key="1">
    <source>
        <dbReference type="SAM" id="MobiDB-lite"/>
    </source>
</evidence>
<evidence type="ECO:0000305" key="2"/>
<feature type="chain" id="PRO_0000100035" description="Probable dehydrin LEA">
    <location>
        <begin position="1"/>
        <end position="185"/>
    </location>
</feature>
<feature type="region of interest" description="Disordered" evidence="1">
    <location>
        <begin position="1"/>
        <end position="185"/>
    </location>
</feature>
<feature type="compositionally biased region" description="Basic and acidic residues" evidence="1">
    <location>
        <begin position="1"/>
        <end position="10"/>
    </location>
</feature>
<feature type="compositionally biased region" description="Basic and acidic residues" evidence="1">
    <location>
        <begin position="44"/>
        <end position="55"/>
    </location>
</feature>
<feature type="compositionally biased region" description="Low complexity" evidence="1">
    <location>
        <begin position="67"/>
        <end position="94"/>
    </location>
</feature>
<feature type="compositionally biased region" description="Basic and acidic residues" evidence="1">
    <location>
        <begin position="130"/>
        <end position="146"/>
    </location>
</feature>
<feature type="compositionally biased region" description="Low complexity" evidence="1">
    <location>
        <begin position="147"/>
        <end position="159"/>
    </location>
</feature>
<feature type="compositionally biased region" description="Basic and acidic residues" evidence="1">
    <location>
        <begin position="161"/>
        <end position="177"/>
    </location>
</feature>
<feature type="sequence conflict" description="In Ref. 5; AAM65831." evidence="2" ref="5">
    <original>A</original>
    <variation>T</variation>
    <location>
        <position position="71"/>
    </location>
</feature>
<feature type="sequence conflict" description="In Ref. 5; AAM65831." evidence="2" ref="5">
    <original>G</original>
    <variation>S</variation>
    <location>
        <position position="138"/>
    </location>
</feature>
<feature type="sequence conflict" description="In Ref. 5; AAM65831." evidence="2" ref="5">
    <original>A</original>
    <variation>T</variation>
    <location>
        <position position="149"/>
    </location>
</feature>
<comment type="similarity">
    <text evidence="2">Belongs to the plant dehydrin family.</text>
</comment>
<dbReference type="EMBL" id="X91920">
    <property type="protein sequence ID" value="CAA63013.1"/>
    <property type="molecule type" value="mRNA"/>
</dbReference>
<dbReference type="EMBL" id="AC006841">
    <property type="protein sequence ID" value="AAD23693.1"/>
    <property type="molecule type" value="Genomic_DNA"/>
</dbReference>
<dbReference type="EMBL" id="CP002685">
    <property type="protein sequence ID" value="AEC07185.1"/>
    <property type="molecule type" value="Genomic_DNA"/>
</dbReference>
<dbReference type="EMBL" id="AY052342">
    <property type="protein sequence ID" value="AAK96534.1"/>
    <property type="molecule type" value="mRNA"/>
</dbReference>
<dbReference type="EMBL" id="AY061911">
    <property type="protein sequence ID" value="AAL31238.1"/>
    <property type="molecule type" value="mRNA"/>
</dbReference>
<dbReference type="EMBL" id="BT000900">
    <property type="protein sequence ID" value="AAN41300.1"/>
    <property type="molecule type" value="mRNA"/>
</dbReference>
<dbReference type="EMBL" id="AY088292">
    <property type="protein sequence ID" value="AAM65831.1"/>
    <property type="molecule type" value="mRNA"/>
</dbReference>
<dbReference type="EMBL" id="Z32586">
    <property type="protein sequence ID" value="CAA83556.1"/>
    <property type="molecule type" value="mRNA"/>
</dbReference>
<dbReference type="PIR" id="H84601">
    <property type="entry name" value="H84601"/>
</dbReference>
<dbReference type="RefSeq" id="NP_179744.1">
    <property type="nucleotide sequence ID" value="NM_127721.4"/>
</dbReference>
<dbReference type="FunCoup" id="Q96261">
    <property type="interactions" value="42"/>
</dbReference>
<dbReference type="STRING" id="3702.Q96261"/>
<dbReference type="iPTMnet" id="Q96261"/>
<dbReference type="PaxDb" id="3702-AT2G21490.1"/>
<dbReference type="ProteomicsDB" id="224040"/>
<dbReference type="EnsemblPlants" id="AT2G21490.1">
    <property type="protein sequence ID" value="AT2G21490.1"/>
    <property type="gene ID" value="AT2G21490"/>
</dbReference>
<dbReference type="GeneID" id="816688"/>
<dbReference type="Gramene" id="AT2G21490.1">
    <property type="protein sequence ID" value="AT2G21490.1"/>
    <property type="gene ID" value="AT2G21490"/>
</dbReference>
<dbReference type="KEGG" id="ath:AT2G21490"/>
<dbReference type="Araport" id="AT2G21490"/>
<dbReference type="TAIR" id="AT2G21490">
    <property type="gene designation" value="LEA"/>
</dbReference>
<dbReference type="eggNOG" id="ENOG502S48F">
    <property type="taxonomic scope" value="Eukaryota"/>
</dbReference>
<dbReference type="HOGENOM" id="CLU_060028_1_0_1"/>
<dbReference type="InParanoid" id="Q96261"/>
<dbReference type="OMA" id="QHHGSLE"/>
<dbReference type="OrthoDB" id="685434at2759"/>
<dbReference type="PRO" id="PR:Q96261"/>
<dbReference type="Proteomes" id="UP000006548">
    <property type="component" value="Chromosome 2"/>
</dbReference>
<dbReference type="ExpressionAtlas" id="Q96261">
    <property type="expression patterns" value="baseline and differential"/>
</dbReference>
<dbReference type="GO" id="GO:0005829">
    <property type="term" value="C:cytosol"/>
    <property type="evidence" value="ECO:0007005"/>
    <property type="project" value="TAIR"/>
</dbReference>
<dbReference type="GO" id="GO:0046872">
    <property type="term" value="F:metal ion binding"/>
    <property type="evidence" value="ECO:0007669"/>
    <property type="project" value="UniProtKB-ARBA"/>
</dbReference>
<dbReference type="GO" id="GO:0009737">
    <property type="term" value="P:response to abscisic acid"/>
    <property type="evidence" value="ECO:0007669"/>
    <property type="project" value="UniProtKB-ARBA"/>
</dbReference>
<dbReference type="GO" id="GO:0009409">
    <property type="term" value="P:response to cold"/>
    <property type="evidence" value="ECO:0007669"/>
    <property type="project" value="UniProtKB-ARBA"/>
</dbReference>
<dbReference type="GO" id="GO:0009414">
    <property type="term" value="P:response to water deprivation"/>
    <property type="evidence" value="ECO:0007669"/>
    <property type="project" value="UniProtKB-ARBA"/>
</dbReference>
<dbReference type="InterPro" id="IPR000167">
    <property type="entry name" value="Dehydrin"/>
</dbReference>
<dbReference type="InterPro" id="IPR030513">
    <property type="entry name" value="Dehydrin_CS"/>
</dbReference>
<dbReference type="PANTHER" id="PTHR33346:SF5">
    <property type="entry name" value="DEHYDRIN LEA-RELATED"/>
    <property type="match status" value="1"/>
</dbReference>
<dbReference type="PANTHER" id="PTHR33346">
    <property type="entry name" value="DEHYDRIN XERO 2-RELATED"/>
    <property type="match status" value="1"/>
</dbReference>
<dbReference type="Pfam" id="PF00257">
    <property type="entry name" value="Dehydrin"/>
    <property type="match status" value="1"/>
</dbReference>
<dbReference type="PROSITE" id="PS00315">
    <property type="entry name" value="DEHYDRIN_1"/>
    <property type="match status" value="1"/>
</dbReference>
<dbReference type="PROSITE" id="PS00823">
    <property type="entry name" value="DEHYDRIN_2"/>
    <property type="match status" value="1"/>
</dbReference>
<gene>
    <name type="primary">LEA</name>
    <name type="ordered locus">At2g21490</name>
    <name type="ORF">F3K23.25</name>
</gene>
<proteinExistence type="evidence at transcript level"/>
<keyword id="KW-1185">Reference proteome</keyword>
<sequence>MADLRDEKGNPIHLTDTQGNPIVDLTDEHGNPMYLTGVVSSTPQHKESTTSDIAEHPTSTVGETHPAAAPAGAGAATAATATGVSAGTGATTTGQQHHGSLEEHLRRSGSSSSSSSEDDGQGGRRKKSIKEKIKEKFGSGKHKDEQTPATATTTGPATTDQPHEKKGILEKIKDKLPGHHNHNHP</sequence>
<protein>
    <recommendedName>
        <fullName>Probable dehydrin LEA</fullName>
    </recommendedName>
</protein>
<reference key="1">
    <citation type="submission" date="1995-10" db="EMBL/GenBank/DDBJ databases">
        <authorList>
            <person name="Raynal M."/>
        </authorList>
    </citation>
    <scope>NUCLEOTIDE SEQUENCE [MRNA]</scope>
    <source>
        <strain>cv. Columbia</strain>
        <tissue>Dry seed</tissue>
    </source>
</reference>
<reference key="2">
    <citation type="journal article" date="1999" name="Nature">
        <title>Sequence and analysis of chromosome 2 of the plant Arabidopsis thaliana.</title>
        <authorList>
            <person name="Lin X."/>
            <person name="Kaul S."/>
            <person name="Rounsley S.D."/>
            <person name="Shea T.P."/>
            <person name="Benito M.-I."/>
            <person name="Town C.D."/>
            <person name="Fujii C.Y."/>
            <person name="Mason T.M."/>
            <person name="Bowman C.L."/>
            <person name="Barnstead M.E."/>
            <person name="Feldblyum T.V."/>
            <person name="Buell C.R."/>
            <person name="Ketchum K.A."/>
            <person name="Lee J.J."/>
            <person name="Ronning C.M."/>
            <person name="Koo H.L."/>
            <person name="Moffat K.S."/>
            <person name="Cronin L.A."/>
            <person name="Shen M."/>
            <person name="Pai G."/>
            <person name="Van Aken S."/>
            <person name="Umayam L."/>
            <person name="Tallon L.J."/>
            <person name="Gill J.E."/>
            <person name="Adams M.D."/>
            <person name="Carrera A.J."/>
            <person name="Creasy T.H."/>
            <person name="Goodman H.M."/>
            <person name="Somerville C.R."/>
            <person name="Copenhaver G.P."/>
            <person name="Preuss D."/>
            <person name="Nierman W.C."/>
            <person name="White O."/>
            <person name="Eisen J.A."/>
            <person name="Salzberg S.L."/>
            <person name="Fraser C.M."/>
            <person name="Venter J.C."/>
        </authorList>
    </citation>
    <scope>NUCLEOTIDE SEQUENCE [LARGE SCALE GENOMIC DNA]</scope>
    <source>
        <strain>cv. Columbia</strain>
    </source>
</reference>
<reference key="3">
    <citation type="journal article" date="2017" name="Plant J.">
        <title>Araport11: a complete reannotation of the Arabidopsis thaliana reference genome.</title>
        <authorList>
            <person name="Cheng C.Y."/>
            <person name="Krishnakumar V."/>
            <person name="Chan A.P."/>
            <person name="Thibaud-Nissen F."/>
            <person name="Schobel S."/>
            <person name="Town C.D."/>
        </authorList>
    </citation>
    <scope>GENOME REANNOTATION</scope>
    <source>
        <strain>cv. Columbia</strain>
    </source>
</reference>
<reference key="4">
    <citation type="journal article" date="2003" name="Science">
        <title>Empirical analysis of transcriptional activity in the Arabidopsis genome.</title>
        <authorList>
            <person name="Yamada K."/>
            <person name="Lim J."/>
            <person name="Dale J.M."/>
            <person name="Chen H."/>
            <person name="Shinn P."/>
            <person name="Palm C.J."/>
            <person name="Southwick A.M."/>
            <person name="Wu H.C."/>
            <person name="Kim C.J."/>
            <person name="Nguyen M."/>
            <person name="Pham P.K."/>
            <person name="Cheuk R.F."/>
            <person name="Karlin-Newmann G."/>
            <person name="Liu S.X."/>
            <person name="Lam B."/>
            <person name="Sakano H."/>
            <person name="Wu T."/>
            <person name="Yu G."/>
            <person name="Miranda M."/>
            <person name="Quach H.L."/>
            <person name="Tripp M."/>
            <person name="Chang C.H."/>
            <person name="Lee J.M."/>
            <person name="Toriumi M.J."/>
            <person name="Chan M.M."/>
            <person name="Tang C.C."/>
            <person name="Onodera C.S."/>
            <person name="Deng J.M."/>
            <person name="Akiyama K."/>
            <person name="Ansari Y."/>
            <person name="Arakawa T."/>
            <person name="Banh J."/>
            <person name="Banno F."/>
            <person name="Bowser L."/>
            <person name="Brooks S.Y."/>
            <person name="Carninci P."/>
            <person name="Chao Q."/>
            <person name="Choy N."/>
            <person name="Enju A."/>
            <person name="Goldsmith A.D."/>
            <person name="Gurjal M."/>
            <person name="Hansen N.F."/>
            <person name="Hayashizaki Y."/>
            <person name="Johnson-Hopson C."/>
            <person name="Hsuan V.W."/>
            <person name="Iida K."/>
            <person name="Karnes M."/>
            <person name="Khan S."/>
            <person name="Koesema E."/>
            <person name="Ishida J."/>
            <person name="Jiang P.X."/>
            <person name="Jones T."/>
            <person name="Kawai J."/>
            <person name="Kamiya A."/>
            <person name="Meyers C."/>
            <person name="Nakajima M."/>
            <person name="Narusaka M."/>
            <person name="Seki M."/>
            <person name="Sakurai T."/>
            <person name="Satou M."/>
            <person name="Tamse R."/>
            <person name="Vaysberg M."/>
            <person name="Wallender E.K."/>
            <person name="Wong C."/>
            <person name="Yamamura Y."/>
            <person name="Yuan S."/>
            <person name="Shinozaki K."/>
            <person name="Davis R.W."/>
            <person name="Theologis A."/>
            <person name="Ecker J.R."/>
        </authorList>
    </citation>
    <scope>NUCLEOTIDE SEQUENCE [LARGE SCALE MRNA]</scope>
    <source>
        <strain>cv. Columbia</strain>
    </source>
</reference>
<reference key="5">
    <citation type="submission" date="2002-03" db="EMBL/GenBank/DDBJ databases">
        <title>Full-length cDNA from Arabidopsis thaliana.</title>
        <authorList>
            <person name="Brover V.V."/>
            <person name="Troukhan M.E."/>
            <person name="Alexandrov N.A."/>
            <person name="Lu Y.-P."/>
            <person name="Flavell R.B."/>
            <person name="Feldmann K.A."/>
        </authorList>
    </citation>
    <scope>NUCLEOTIDE SEQUENCE [LARGE SCALE MRNA]</scope>
</reference>
<reference key="6">
    <citation type="journal article" date="1996" name="Plant J.">
        <title>Further progress towards a catalogue of all Arabidopsis genes: analysis of a set of 5000 non-redundant ESTs.</title>
        <authorList>
            <person name="Cooke R."/>
            <person name="Raynal M."/>
            <person name="Laudie M."/>
            <person name="Grellet F."/>
            <person name="Delseny M."/>
            <person name="Morris P.-C."/>
            <person name="Guerrier D."/>
            <person name="Giraudat J."/>
            <person name="Quigley F."/>
            <person name="Clabault G."/>
            <person name="Li Y.-F."/>
            <person name="Mache R."/>
            <person name="Krivitzky M."/>
            <person name="Gy I.J.-J."/>
            <person name="Kreis M."/>
            <person name="Lecharny A."/>
            <person name="Parmentier Y."/>
            <person name="Marbach J."/>
            <person name="Fleck J."/>
            <person name="Clement B."/>
            <person name="Philipps G."/>
            <person name="Herve C."/>
            <person name="Bardet C."/>
            <person name="Tremousaygue D."/>
            <person name="Lescure B."/>
            <person name="Lacomme C."/>
            <person name="Roby D."/>
            <person name="Jourjon M.-F."/>
            <person name="Chabrier P."/>
            <person name="Charpenteau J.-L."/>
            <person name="Desprez T."/>
            <person name="Amselem J."/>
            <person name="Chiapello H."/>
            <person name="Hoefte H."/>
        </authorList>
    </citation>
    <scope>NUCLEOTIDE SEQUENCE [LARGE SCALE MRNA] OF 66-170</scope>
    <source>
        <strain>cv. Columbia</strain>
        <tissue>Dry seed</tissue>
    </source>
</reference>
<accession>Q96261</accession>
<accession>Q42254</accession>
<accession>Q8L9Q5</accession>